<comment type="function">
    <text evidence="2">GTP hydrolase that promotes the GTP-dependent binding of aminoacyl-tRNA to the A-site of ribosomes during protein biosynthesis.</text>
</comment>
<comment type="catalytic activity">
    <reaction evidence="2">
        <text>GTP + H2O = GDP + phosphate + H(+)</text>
        <dbReference type="Rhea" id="RHEA:19669"/>
        <dbReference type="ChEBI" id="CHEBI:15377"/>
        <dbReference type="ChEBI" id="CHEBI:15378"/>
        <dbReference type="ChEBI" id="CHEBI:37565"/>
        <dbReference type="ChEBI" id="CHEBI:43474"/>
        <dbReference type="ChEBI" id="CHEBI:58189"/>
        <dbReference type="EC" id="3.6.5.3"/>
    </reaction>
    <physiologicalReaction direction="left-to-right" evidence="2">
        <dbReference type="Rhea" id="RHEA:19670"/>
    </physiologicalReaction>
</comment>
<comment type="subunit">
    <text evidence="2">Monomer.</text>
</comment>
<comment type="subcellular location">
    <subcellularLocation>
        <location evidence="2">Cytoplasm</location>
    </subcellularLocation>
</comment>
<comment type="similarity">
    <text evidence="2">Belongs to the TRAFAC class translation factor GTPase superfamily. Classic translation factor GTPase family. EF-Tu/EF-1A subfamily.</text>
</comment>
<name>EFTU_CERS5</name>
<reference key="1">
    <citation type="submission" date="2007-04" db="EMBL/GenBank/DDBJ databases">
        <title>Complete sequence of chromosome of Rhodobacter sphaeroides ATCC 17025.</title>
        <authorList>
            <consortium name="US DOE Joint Genome Institute"/>
            <person name="Copeland A."/>
            <person name="Lucas S."/>
            <person name="Lapidus A."/>
            <person name="Barry K."/>
            <person name="Detter J.C."/>
            <person name="Glavina del Rio T."/>
            <person name="Hammon N."/>
            <person name="Israni S."/>
            <person name="Dalin E."/>
            <person name="Tice H."/>
            <person name="Pitluck S."/>
            <person name="Chertkov O."/>
            <person name="Brettin T."/>
            <person name="Bruce D."/>
            <person name="Han C."/>
            <person name="Schmutz J."/>
            <person name="Larimer F."/>
            <person name="Land M."/>
            <person name="Hauser L."/>
            <person name="Kyrpides N."/>
            <person name="Kim E."/>
            <person name="Richardson P."/>
            <person name="Mackenzie C."/>
            <person name="Choudhary M."/>
            <person name="Donohue T.J."/>
            <person name="Kaplan S."/>
        </authorList>
    </citation>
    <scope>NUCLEOTIDE SEQUENCE [LARGE SCALE GENOMIC DNA]</scope>
    <source>
        <strain>ATCC 17025 / ATH 2.4.3</strain>
    </source>
</reference>
<keyword id="KW-0963">Cytoplasm</keyword>
<keyword id="KW-0251">Elongation factor</keyword>
<keyword id="KW-0342">GTP-binding</keyword>
<keyword id="KW-0378">Hydrolase</keyword>
<keyword id="KW-0460">Magnesium</keyword>
<keyword id="KW-0479">Metal-binding</keyword>
<keyword id="KW-0547">Nucleotide-binding</keyword>
<keyword id="KW-0648">Protein biosynthesis</keyword>
<organism>
    <name type="scientific">Cereibacter sphaeroides (strain ATCC 17025 / ATH 2.4.3)</name>
    <name type="common">Rhodobacter sphaeroides</name>
    <dbReference type="NCBI Taxonomy" id="349102"/>
    <lineage>
        <taxon>Bacteria</taxon>
        <taxon>Pseudomonadati</taxon>
        <taxon>Pseudomonadota</taxon>
        <taxon>Alphaproteobacteria</taxon>
        <taxon>Rhodobacterales</taxon>
        <taxon>Paracoccaceae</taxon>
        <taxon>Cereibacter</taxon>
    </lineage>
</organism>
<proteinExistence type="inferred from homology"/>
<accession>A4WVL0</accession>
<gene>
    <name evidence="2" type="primary">tuf1</name>
    <name type="ordered locus">Rsph17025_2536</name>
</gene>
<gene>
    <name evidence="2" type="primary">tuf2</name>
    <name type="ordered locus">Rsph17025_2549</name>
</gene>
<sequence>MAKAKFERNKPHVNIGTIGHVDHGKTTLTAAITKYFGEFRAYDQIDGAPEERARGITISTAHVEYESESRHYAHVDCPGHADYVKNMITGAAQMDGAILVVNAADGPMPQTREHILLGRQVGIPYMVVYMNKVDQVDDPELLELVEMEIRELLSSYDYPGDDIPIIKGSALAAMNGTDKEIGEDSIRALIAAVDEYIPTPARAVDQPFLMPVEDVFSISGRGTVATGRIERGVVKVGEELEIVGIRPSKKTVCTGVEMFRKLLDQGEAGDNVGLLLRGVDRDGIERGQVLCKPGSVKPHTKFEAEAYILTKEEGGRHTPFFANYRPQFYFRTTDVTGTVELPEGTEMVMPGDNLKFNVELIAPIAMEEKLRFAIREGGRTVGAGVVSKIIA</sequence>
<protein>
    <recommendedName>
        <fullName evidence="2">Elongation factor Tu</fullName>
        <shortName evidence="2">EF-Tu</shortName>
        <ecNumber evidence="2">3.6.5.3</ecNumber>
    </recommendedName>
</protein>
<evidence type="ECO:0000250" key="1"/>
<evidence type="ECO:0000255" key="2">
    <source>
        <dbReference type="HAMAP-Rule" id="MF_00118"/>
    </source>
</evidence>
<feature type="chain" id="PRO_0000337490" description="Elongation factor Tu">
    <location>
        <begin position="1"/>
        <end position="391"/>
    </location>
</feature>
<feature type="domain" description="tr-type G">
    <location>
        <begin position="10"/>
        <end position="201"/>
    </location>
</feature>
<feature type="region of interest" description="G1" evidence="1">
    <location>
        <begin position="19"/>
        <end position="26"/>
    </location>
</feature>
<feature type="region of interest" description="G2" evidence="1">
    <location>
        <begin position="55"/>
        <end position="59"/>
    </location>
</feature>
<feature type="region of interest" description="G3" evidence="1">
    <location>
        <begin position="76"/>
        <end position="79"/>
    </location>
</feature>
<feature type="region of interest" description="G4" evidence="1">
    <location>
        <begin position="131"/>
        <end position="134"/>
    </location>
</feature>
<feature type="region of interest" description="G5" evidence="1">
    <location>
        <begin position="169"/>
        <end position="171"/>
    </location>
</feature>
<feature type="binding site" evidence="2">
    <location>
        <begin position="19"/>
        <end position="26"/>
    </location>
    <ligand>
        <name>GTP</name>
        <dbReference type="ChEBI" id="CHEBI:37565"/>
    </ligand>
</feature>
<feature type="binding site" evidence="2">
    <location>
        <position position="26"/>
    </location>
    <ligand>
        <name>Mg(2+)</name>
        <dbReference type="ChEBI" id="CHEBI:18420"/>
    </ligand>
</feature>
<feature type="binding site" evidence="2">
    <location>
        <begin position="76"/>
        <end position="80"/>
    </location>
    <ligand>
        <name>GTP</name>
        <dbReference type="ChEBI" id="CHEBI:37565"/>
    </ligand>
</feature>
<feature type="binding site" evidence="2">
    <location>
        <begin position="131"/>
        <end position="134"/>
    </location>
    <ligand>
        <name>GTP</name>
        <dbReference type="ChEBI" id="CHEBI:37565"/>
    </ligand>
</feature>
<dbReference type="EC" id="3.6.5.3" evidence="2"/>
<dbReference type="EMBL" id="CP000661">
    <property type="protein sequence ID" value="ABP71424.1"/>
    <property type="molecule type" value="Genomic_DNA"/>
</dbReference>
<dbReference type="EMBL" id="CP000661">
    <property type="protein sequence ID" value="ABP71437.1"/>
    <property type="molecule type" value="Genomic_DNA"/>
</dbReference>
<dbReference type="SMR" id="A4WVL0"/>
<dbReference type="STRING" id="349102.Rsph17025_2536"/>
<dbReference type="KEGG" id="rsq:Rsph17025_2536"/>
<dbReference type="KEGG" id="rsq:Rsph17025_2549"/>
<dbReference type="eggNOG" id="COG0050">
    <property type="taxonomic scope" value="Bacteria"/>
</dbReference>
<dbReference type="HOGENOM" id="CLU_007265_0_1_5"/>
<dbReference type="BioCyc" id="RSPH349102:G1G8M-2614-MONOMER"/>
<dbReference type="BioCyc" id="RSPH349102:G1G8M-2628-MONOMER"/>
<dbReference type="GO" id="GO:0005737">
    <property type="term" value="C:cytoplasm"/>
    <property type="evidence" value="ECO:0007669"/>
    <property type="project" value="UniProtKB-SubCell"/>
</dbReference>
<dbReference type="GO" id="GO:0005525">
    <property type="term" value="F:GTP binding"/>
    <property type="evidence" value="ECO:0007669"/>
    <property type="project" value="UniProtKB-UniRule"/>
</dbReference>
<dbReference type="GO" id="GO:0003924">
    <property type="term" value="F:GTPase activity"/>
    <property type="evidence" value="ECO:0007669"/>
    <property type="project" value="InterPro"/>
</dbReference>
<dbReference type="GO" id="GO:0097216">
    <property type="term" value="F:guanosine tetraphosphate binding"/>
    <property type="evidence" value="ECO:0007669"/>
    <property type="project" value="UniProtKB-ARBA"/>
</dbReference>
<dbReference type="GO" id="GO:0003746">
    <property type="term" value="F:translation elongation factor activity"/>
    <property type="evidence" value="ECO:0007669"/>
    <property type="project" value="UniProtKB-UniRule"/>
</dbReference>
<dbReference type="CDD" id="cd01884">
    <property type="entry name" value="EF_Tu"/>
    <property type="match status" value="1"/>
</dbReference>
<dbReference type="CDD" id="cd03697">
    <property type="entry name" value="EFTU_II"/>
    <property type="match status" value="1"/>
</dbReference>
<dbReference type="CDD" id="cd03707">
    <property type="entry name" value="EFTU_III"/>
    <property type="match status" value="1"/>
</dbReference>
<dbReference type="FunFam" id="2.40.30.10:FF:000001">
    <property type="entry name" value="Elongation factor Tu"/>
    <property type="match status" value="1"/>
</dbReference>
<dbReference type="FunFam" id="3.40.50.300:FF:000003">
    <property type="entry name" value="Elongation factor Tu"/>
    <property type="match status" value="1"/>
</dbReference>
<dbReference type="Gene3D" id="3.40.50.300">
    <property type="entry name" value="P-loop containing nucleotide triphosphate hydrolases"/>
    <property type="match status" value="1"/>
</dbReference>
<dbReference type="Gene3D" id="2.40.30.10">
    <property type="entry name" value="Translation factors"/>
    <property type="match status" value="2"/>
</dbReference>
<dbReference type="HAMAP" id="MF_00118_B">
    <property type="entry name" value="EF_Tu_B"/>
    <property type="match status" value="1"/>
</dbReference>
<dbReference type="InterPro" id="IPR041709">
    <property type="entry name" value="EF-Tu_GTP-bd"/>
</dbReference>
<dbReference type="InterPro" id="IPR050055">
    <property type="entry name" value="EF-Tu_GTPase"/>
</dbReference>
<dbReference type="InterPro" id="IPR004161">
    <property type="entry name" value="EFTu-like_2"/>
</dbReference>
<dbReference type="InterPro" id="IPR033720">
    <property type="entry name" value="EFTU_2"/>
</dbReference>
<dbReference type="InterPro" id="IPR031157">
    <property type="entry name" value="G_TR_CS"/>
</dbReference>
<dbReference type="InterPro" id="IPR027417">
    <property type="entry name" value="P-loop_NTPase"/>
</dbReference>
<dbReference type="InterPro" id="IPR005225">
    <property type="entry name" value="Small_GTP-bd"/>
</dbReference>
<dbReference type="InterPro" id="IPR000795">
    <property type="entry name" value="T_Tr_GTP-bd_dom"/>
</dbReference>
<dbReference type="InterPro" id="IPR009000">
    <property type="entry name" value="Transl_B-barrel_sf"/>
</dbReference>
<dbReference type="InterPro" id="IPR009001">
    <property type="entry name" value="Transl_elong_EF1A/Init_IF2_C"/>
</dbReference>
<dbReference type="InterPro" id="IPR004541">
    <property type="entry name" value="Transl_elong_EFTu/EF1A_bac/org"/>
</dbReference>
<dbReference type="InterPro" id="IPR004160">
    <property type="entry name" value="Transl_elong_EFTu/EF1A_C"/>
</dbReference>
<dbReference type="NCBIfam" id="TIGR00485">
    <property type="entry name" value="EF-Tu"/>
    <property type="match status" value="1"/>
</dbReference>
<dbReference type="NCBIfam" id="NF000766">
    <property type="entry name" value="PRK00049.1"/>
    <property type="match status" value="1"/>
</dbReference>
<dbReference type="NCBIfam" id="NF009372">
    <property type="entry name" value="PRK12735.1"/>
    <property type="match status" value="1"/>
</dbReference>
<dbReference type="NCBIfam" id="NF009373">
    <property type="entry name" value="PRK12736.1"/>
    <property type="match status" value="1"/>
</dbReference>
<dbReference type="NCBIfam" id="TIGR00231">
    <property type="entry name" value="small_GTP"/>
    <property type="match status" value="1"/>
</dbReference>
<dbReference type="PANTHER" id="PTHR43721:SF22">
    <property type="entry name" value="ELONGATION FACTOR TU, MITOCHONDRIAL"/>
    <property type="match status" value="1"/>
</dbReference>
<dbReference type="PANTHER" id="PTHR43721">
    <property type="entry name" value="ELONGATION FACTOR TU-RELATED"/>
    <property type="match status" value="1"/>
</dbReference>
<dbReference type="Pfam" id="PF00009">
    <property type="entry name" value="GTP_EFTU"/>
    <property type="match status" value="1"/>
</dbReference>
<dbReference type="Pfam" id="PF03144">
    <property type="entry name" value="GTP_EFTU_D2"/>
    <property type="match status" value="1"/>
</dbReference>
<dbReference type="Pfam" id="PF03143">
    <property type="entry name" value="GTP_EFTU_D3"/>
    <property type="match status" value="1"/>
</dbReference>
<dbReference type="PRINTS" id="PR00315">
    <property type="entry name" value="ELONGATNFCT"/>
</dbReference>
<dbReference type="SUPFAM" id="SSF50465">
    <property type="entry name" value="EF-Tu/eEF-1alpha/eIF2-gamma C-terminal domain"/>
    <property type="match status" value="1"/>
</dbReference>
<dbReference type="SUPFAM" id="SSF52540">
    <property type="entry name" value="P-loop containing nucleoside triphosphate hydrolases"/>
    <property type="match status" value="1"/>
</dbReference>
<dbReference type="SUPFAM" id="SSF50447">
    <property type="entry name" value="Translation proteins"/>
    <property type="match status" value="1"/>
</dbReference>
<dbReference type="PROSITE" id="PS00301">
    <property type="entry name" value="G_TR_1"/>
    <property type="match status" value="1"/>
</dbReference>
<dbReference type="PROSITE" id="PS51722">
    <property type="entry name" value="G_TR_2"/>
    <property type="match status" value="1"/>
</dbReference>